<dbReference type="EMBL" id="BA000041">
    <property type="protein sequence ID" value="BAC78169.1"/>
    <property type="molecule type" value="Genomic_DNA"/>
</dbReference>
<dbReference type="EMBL" id="AB210147">
    <property type="protein sequence ID" value="BAE92756.1"/>
    <property type="molecule type" value="Genomic_DNA"/>
</dbReference>
<dbReference type="EMBL" id="AB210148">
    <property type="protein sequence ID" value="BAE92760.1"/>
    <property type="molecule type" value="Genomic_DNA"/>
</dbReference>
<dbReference type="RefSeq" id="NP_001038970.1">
    <property type="nucleotide sequence ID" value="NM_001045505.1"/>
</dbReference>
<dbReference type="STRING" id="9598.ENSPTRP00000086170"/>
<dbReference type="GeneID" id="462554"/>
<dbReference type="KEGG" id="ptr:462554"/>
<dbReference type="CTD" id="170680"/>
<dbReference type="eggNOG" id="ENOG502QQEE">
    <property type="taxonomic scope" value="Eukaryota"/>
</dbReference>
<dbReference type="InParanoid" id="Q7YR45"/>
<dbReference type="OrthoDB" id="17698at9604"/>
<dbReference type="Proteomes" id="UP000002277">
    <property type="component" value="Unplaced"/>
</dbReference>
<dbReference type="GO" id="GO:0005576">
    <property type="term" value="C:extracellular region"/>
    <property type="evidence" value="ECO:0007669"/>
    <property type="project" value="UniProtKB-SubCell"/>
</dbReference>
<dbReference type="InterPro" id="IPR029271">
    <property type="entry name" value="SPR1"/>
</dbReference>
<dbReference type="PANTHER" id="PTHR31853">
    <property type="entry name" value="PSORIASIS SUSCEPTIBILITY 1 CANDIDATE GENE 2 PROTEIN"/>
    <property type="match status" value="1"/>
</dbReference>
<dbReference type="PANTHER" id="PTHR31853:SF1">
    <property type="entry name" value="PSORIASIS SUSCEPTIBILITY 1 CANDIDATE GENE 2 PROTEIN"/>
    <property type="match status" value="1"/>
</dbReference>
<dbReference type="Pfam" id="PF15356">
    <property type="entry name" value="SPR1"/>
    <property type="match status" value="1"/>
</dbReference>
<gene>
    <name type="primary">PSORS1C2</name>
    <name type="synonym">SPR1</name>
</gene>
<reference key="1">
    <citation type="journal article" date="2003" name="Proc. Natl. Acad. Sci. U.S.A.">
        <title>Comparative sequencing of human and chimpanzee MHC class I regions unveils insertions/deletions as the major path to genomic divergence.</title>
        <authorList>
            <person name="Anzai T."/>
            <person name="Shiina T."/>
            <person name="Kimura N."/>
            <person name="Yanagiya K."/>
            <person name="Kohara S."/>
            <person name="Shigenari A."/>
            <person name="Yamagata T."/>
            <person name="Kulski J.K."/>
            <person name="Naruse T.K."/>
            <person name="Fujimori Y."/>
            <person name="Fukuzumi Y."/>
            <person name="Yamazaki M."/>
            <person name="Tashiro H."/>
            <person name="Iwamoto C."/>
            <person name="Umehara Y."/>
            <person name="Imanishi T."/>
            <person name="Meyer A."/>
            <person name="Ikeo K."/>
            <person name="Gojobori T."/>
            <person name="Bahram S."/>
            <person name="Inoko H."/>
        </authorList>
    </citation>
    <scope>NUCLEOTIDE SEQUENCE [LARGE SCALE GENOMIC DNA]</scope>
</reference>
<reference key="2">
    <citation type="journal article" date="2006" name="Genetics">
        <title>Rapid evolution of major histocompatibility complex class I genes in primates generates new disease alleles in humans via hitchhiking diversity.</title>
        <authorList>
            <person name="Shiina T."/>
            <person name="Ota M."/>
            <person name="Shimizu S."/>
            <person name="Katsuyama Y."/>
            <person name="Hashimoto N."/>
            <person name="Takasu M."/>
            <person name="Anzai T."/>
            <person name="Kulski J.K."/>
            <person name="Kikkawa E."/>
            <person name="Naruse T."/>
            <person name="Kimura N."/>
            <person name="Yanagiya K."/>
            <person name="Watanabe A."/>
            <person name="Hosomichi K."/>
            <person name="Kohara S."/>
            <person name="Iwamoto C."/>
            <person name="Umehara Y."/>
            <person name="Meyer A."/>
            <person name="Wanner V."/>
            <person name="Sano K."/>
            <person name="Macquin C."/>
            <person name="Ikeo K."/>
            <person name="Tokunaga K."/>
            <person name="Gojobori T."/>
            <person name="Inoko H."/>
            <person name="Bahram S."/>
        </authorList>
    </citation>
    <scope>NUCLEOTIDE SEQUENCE [LARGE SCALE GENOMIC DNA]</scope>
</reference>
<keyword id="KW-1185">Reference proteome</keyword>
<keyword id="KW-0964">Secreted</keyword>
<keyword id="KW-0732">Signal</keyword>
<name>PS1C2_PANTR</name>
<feature type="signal peptide" evidence="1">
    <location>
        <begin position="1"/>
        <end position="22"/>
    </location>
</feature>
<feature type="chain" id="PRO_0000022161" description="Psoriasis susceptibility 1 candidate gene 2 protein homolog">
    <location>
        <begin position="23"/>
        <end position="136"/>
    </location>
</feature>
<feature type="region of interest" description="Disordered" evidence="2">
    <location>
        <begin position="20"/>
        <end position="136"/>
    </location>
</feature>
<feature type="compositionally biased region" description="Basic and acidic residues" evidence="2">
    <location>
        <begin position="23"/>
        <end position="33"/>
    </location>
</feature>
<feature type="compositionally biased region" description="Pro residues" evidence="2">
    <location>
        <begin position="44"/>
        <end position="74"/>
    </location>
</feature>
<feature type="compositionally biased region" description="Pro residues" evidence="2">
    <location>
        <begin position="83"/>
        <end position="116"/>
    </location>
</feature>
<feature type="compositionally biased region" description="Basic and acidic residues" evidence="2">
    <location>
        <begin position="117"/>
        <end position="136"/>
    </location>
</feature>
<evidence type="ECO:0000255" key="1"/>
<evidence type="ECO:0000256" key="2">
    <source>
        <dbReference type="SAM" id="MobiDB-lite"/>
    </source>
</evidence>
<evidence type="ECO:0000305" key="3"/>
<protein>
    <recommendedName>
        <fullName>Psoriasis susceptibility 1 candidate gene 2 protein homolog</fullName>
    </recommendedName>
    <alternativeName>
        <fullName>Protein SPR1</fullName>
    </alternativeName>
</protein>
<proteinExistence type="inferred from homology"/>
<comment type="subcellular location">
    <subcellularLocation>
        <location evidence="3">Secreted</location>
    </subcellularLocation>
</comment>
<organism>
    <name type="scientific">Pan troglodytes</name>
    <name type="common">Chimpanzee</name>
    <dbReference type="NCBI Taxonomy" id="9598"/>
    <lineage>
        <taxon>Eukaryota</taxon>
        <taxon>Metazoa</taxon>
        <taxon>Chordata</taxon>
        <taxon>Craniata</taxon>
        <taxon>Vertebrata</taxon>
        <taxon>Euteleostomi</taxon>
        <taxon>Mammalia</taxon>
        <taxon>Eutheria</taxon>
        <taxon>Euarchontoglires</taxon>
        <taxon>Primates</taxon>
        <taxon>Haplorrhini</taxon>
        <taxon>Catarrhini</taxon>
        <taxon>Hominidae</taxon>
        <taxon>Pan</taxon>
    </lineage>
</organism>
<sequence>MILNWKLLGILVLCLHTRGISGSEDHPSHPPAEDREEAGSPTLPQGPPVPGDPWPGAPPLFEDPPPPHPSPPWRDLPETGVWPPEPPRTDPPQPPRPDDPWPAGPQPPENPWPPAPEVDHRPQEEPDLDPPREEYR</sequence>
<accession>Q7YR45</accession>
<accession>Q1XI10</accession>